<reference key="1">
    <citation type="submission" date="1992-10" db="EMBL/GenBank/DDBJ databases">
        <authorList>
            <person name="Weber L."/>
            <person name="Byers B."/>
        </authorList>
    </citation>
    <scope>NUCLEOTIDE SEQUENCE [GENOMIC DNA]</scope>
</reference>
<reference key="2">
    <citation type="journal article" date="1997" name="Nature">
        <title>The nucleotide sequence of Saccharomyces cerevisiae chromosome XVI.</title>
        <authorList>
            <person name="Bussey H."/>
            <person name="Storms R.K."/>
            <person name="Ahmed A."/>
            <person name="Albermann K."/>
            <person name="Allen E."/>
            <person name="Ansorge W."/>
            <person name="Araujo R."/>
            <person name="Aparicio A."/>
            <person name="Barrell B.G."/>
            <person name="Badcock K."/>
            <person name="Benes V."/>
            <person name="Botstein D."/>
            <person name="Bowman S."/>
            <person name="Brueckner M."/>
            <person name="Carpenter J."/>
            <person name="Cherry J.M."/>
            <person name="Chung E."/>
            <person name="Churcher C.M."/>
            <person name="Coster F."/>
            <person name="Davis K."/>
            <person name="Davis R.W."/>
            <person name="Dietrich F.S."/>
            <person name="Delius H."/>
            <person name="DiPaolo T."/>
            <person name="Dubois E."/>
            <person name="Duesterhoeft A."/>
            <person name="Duncan M."/>
            <person name="Floeth M."/>
            <person name="Fortin N."/>
            <person name="Friesen J.D."/>
            <person name="Fritz C."/>
            <person name="Goffeau A."/>
            <person name="Hall J."/>
            <person name="Hebling U."/>
            <person name="Heumann K."/>
            <person name="Hilbert H."/>
            <person name="Hillier L.W."/>
            <person name="Hunicke-Smith S."/>
            <person name="Hyman R.W."/>
            <person name="Johnston M."/>
            <person name="Kalman S."/>
            <person name="Kleine K."/>
            <person name="Komp C."/>
            <person name="Kurdi O."/>
            <person name="Lashkari D."/>
            <person name="Lew H."/>
            <person name="Lin A."/>
            <person name="Lin D."/>
            <person name="Louis E.J."/>
            <person name="Marathe R."/>
            <person name="Messenguy F."/>
            <person name="Mewes H.-W."/>
            <person name="Mirtipati S."/>
            <person name="Moestl D."/>
            <person name="Mueller-Auer S."/>
            <person name="Namath A."/>
            <person name="Nentwich U."/>
            <person name="Oefner P."/>
            <person name="Pearson D."/>
            <person name="Petel F.X."/>
            <person name="Pohl T.M."/>
            <person name="Purnelle B."/>
            <person name="Rajandream M.A."/>
            <person name="Rechmann S."/>
            <person name="Rieger M."/>
            <person name="Riles L."/>
            <person name="Roberts D."/>
            <person name="Schaefer M."/>
            <person name="Scharfe M."/>
            <person name="Scherens B."/>
            <person name="Schramm S."/>
            <person name="Schroeder M."/>
            <person name="Sdicu A.-M."/>
            <person name="Tettelin H."/>
            <person name="Urrestarazu L.A."/>
            <person name="Ushinsky S."/>
            <person name="Vierendeels F."/>
            <person name="Vissers S."/>
            <person name="Voss H."/>
            <person name="Walsh S.V."/>
            <person name="Wambutt R."/>
            <person name="Wang Y."/>
            <person name="Wedler E."/>
            <person name="Wedler H."/>
            <person name="Winnett E."/>
            <person name="Zhong W.-W."/>
            <person name="Zollner A."/>
            <person name="Vo D.H."/>
            <person name="Hani J."/>
        </authorList>
    </citation>
    <scope>NUCLEOTIDE SEQUENCE [LARGE SCALE GENOMIC DNA]</scope>
    <source>
        <strain>ATCC 204508 / S288c</strain>
    </source>
</reference>
<reference key="3">
    <citation type="journal article" date="2014" name="G3 (Bethesda)">
        <title>The reference genome sequence of Saccharomyces cerevisiae: Then and now.</title>
        <authorList>
            <person name="Engel S.R."/>
            <person name="Dietrich F.S."/>
            <person name="Fisk D.G."/>
            <person name="Binkley G."/>
            <person name="Balakrishnan R."/>
            <person name="Costanzo M.C."/>
            <person name="Dwight S.S."/>
            <person name="Hitz B.C."/>
            <person name="Karra K."/>
            <person name="Nash R.S."/>
            <person name="Weng S."/>
            <person name="Wong E.D."/>
            <person name="Lloyd P."/>
            <person name="Skrzypek M.S."/>
            <person name="Miyasato S.R."/>
            <person name="Simison M."/>
            <person name="Cherry J.M."/>
        </authorList>
    </citation>
    <scope>GENOME REANNOTATION</scope>
    <source>
        <strain>ATCC 204508 / S288c</strain>
    </source>
</reference>
<reference key="4">
    <citation type="journal article" date="2004" name="Cell">
        <title>A protein complex containing Mei5 and Sae3 promotes the assembly of the meiosis-specific RecA homolog Dmc1.</title>
        <authorList>
            <person name="Hayase A."/>
            <person name="Takagi M."/>
            <person name="Miyazaki T."/>
            <person name="Oshiumi H."/>
            <person name="Shinohara M."/>
            <person name="Shinohara A."/>
        </authorList>
    </citation>
    <scope>FUNCTION</scope>
    <scope>SUBCELLULAR LOCATION</scope>
    <scope>INTERACTION WITH DMC1 AND SAE3</scope>
</reference>
<sequence>MHNQEEWLDKDKTLVNEEENTCINHSYTKKDTNNYRVGKSGIKDLKKPTNQKEIAIKNRELTKQLTLLRQENNHLQQACKILSENKIIENRKSIEKWRTICEMELSFILNSTLIKINRMGGYKDFLEKEMEAKKRRLEYQIDNGMEDQICEIKESDDFRQLSEVEKQEWESQMNEQLKELEKKKIAELEKLNKVLHDSEGKDFGMAELCTRLKLDYSLIFPQ</sequence>
<gene>
    <name type="primary">MEI5</name>
    <name type="ordered locus">YPL121C</name>
    <name type="ORF">LPH6C</name>
</gene>
<dbReference type="EMBL" id="L03182">
    <property type="protein sequence ID" value="AAA34768.1"/>
    <property type="molecule type" value="Genomic_DNA"/>
</dbReference>
<dbReference type="EMBL" id="U43503">
    <property type="protein sequence ID" value="AAB68241.1"/>
    <property type="molecule type" value="Genomic_DNA"/>
</dbReference>
<dbReference type="EMBL" id="BK006949">
    <property type="protein sequence ID" value="DAA11312.1"/>
    <property type="molecule type" value="Genomic_DNA"/>
</dbReference>
<dbReference type="PIR" id="S62001">
    <property type="entry name" value="S62001"/>
</dbReference>
<dbReference type="RefSeq" id="NP_015204.1">
    <property type="nucleotide sequence ID" value="NM_001183935.1"/>
</dbReference>
<dbReference type="SMR" id="P32489"/>
<dbReference type="BioGRID" id="36060">
    <property type="interactions" value="60"/>
</dbReference>
<dbReference type="ComplexPortal" id="CPX-1288">
    <property type="entry name" value="MEI5-SAE3 recombination assembly factor complex"/>
</dbReference>
<dbReference type="DIP" id="DIP-2964N"/>
<dbReference type="FunCoup" id="P32489">
    <property type="interactions" value="27"/>
</dbReference>
<dbReference type="IntAct" id="P32489">
    <property type="interactions" value="5"/>
</dbReference>
<dbReference type="MINT" id="P32489"/>
<dbReference type="STRING" id="4932.YPL121C"/>
<dbReference type="iPTMnet" id="P32489"/>
<dbReference type="PaxDb" id="4932-YPL121C"/>
<dbReference type="EnsemblFungi" id="YPL121C_mRNA">
    <property type="protein sequence ID" value="YPL121C"/>
    <property type="gene ID" value="YPL121C"/>
</dbReference>
<dbReference type="GeneID" id="855982"/>
<dbReference type="KEGG" id="sce:YPL121C"/>
<dbReference type="AGR" id="SGD:S000006042"/>
<dbReference type="SGD" id="S000006042">
    <property type="gene designation" value="MEI5"/>
</dbReference>
<dbReference type="VEuPathDB" id="FungiDB:YPL121C"/>
<dbReference type="eggNOG" id="ENOG502S2TF">
    <property type="taxonomic scope" value="Eukaryota"/>
</dbReference>
<dbReference type="HOGENOM" id="CLU_084833_1_0_1"/>
<dbReference type="InParanoid" id="P32489"/>
<dbReference type="OMA" id="AQMASNY"/>
<dbReference type="OrthoDB" id="27934at2759"/>
<dbReference type="BioCyc" id="YEAST:G3O-34020-MONOMER"/>
<dbReference type="BioGRID-ORCS" id="855982">
    <property type="hits" value="7 hits in 10 CRISPR screens"/>
</dbReference>
<dbReference type="PRO" id="PR:P32489"/>
<dbReference type="Proteomes" id="UP000002311">
    <property type="component" value="Chromosome XVI"/>
</dbReference>
<dbReference type="RNAct" id="P32489">
    <property type="molecule type" value="protein"/>
</dbReference>
<dbReference type="GO" id="GO:0000794">
    <property type="term" value="C:condensed nuclear chromosome"/>
    <property type="evidence" value="ECO:0000314"/>
    <property type="project" value="SGD"/>
</dbReference>
<dbReference type="GO" id="GO:0000228">
    <property type="term" value="C:nuclear chromosome"/>
    <property type="evidence" value="ECO:0000314"/>
    <property type="project" value="ComplexPortal"/>
</dbReference>
<dbReference type="GO" id="GO:0005634">
    <property type="term" value="C:nucleus"/>
    <property type="evidence" value="ECO:0007005"/>
    <property type="project" value="SGD"/>
</dbReference>
<dbReference type="GO" id="GO:0032798">
    <property type="term" value="C:Swi5-Sfr1 complex"/>
    <property type="evidence" value="ECO:0000353"/>
    <property type="project" value="ComplexPortal"/>
</dbReference>
<dbReference type="GO" id="GO:0000707">
    <property type="term" value="P:meiotic DNA recombinase assembly"/>
    <property type="evidence" value="ECO:0000315"/>
    <property type="project" value="SGD"/>
</dbReference>
<dbReference type="GO" id="GO:0007131">
    <property type="term" value="P:reciprocal meiotic recombination"/>
    <property type="evidence" value="ECO:0000315"/>
    <property type="project" value="SGD"/>
</dbReference>
<dbReference type="GO" id="GO:0030435">
    <property type="term" value="P:sporulation resulting in formation of a cellular spore"/>
    <property type="evidence" value="ECO:0007669"/>
    <property type="project" value="UniProtKB-KW"/>
</dbReference>
<dbReference type="Gene3D" id="6.10.140.1020">
    <property type="match status" value="1"/>
</dbReference>
<dbReference type="InterPro" id="IPR018468">
    <property type="entry name" value="SFR1/Mei5"/>
</dbReference>
<dbReference type="Pfam" id="PF10376">
    <property type="entry name" value="Mei5"/>
    <property type="match status" value="1"/>
</dbReference>
<name>MEI5_YEAST</name>
<comment type="function">
    <text evidence="1">Involved in meiotic DNA-break repair. Required for the recruitment of DCM1 to meiosis recombination hot spots.</text>
</comment>
<comment type="subunit">
    <text>Forms a ternary complex with DMC1 and SAE3.</text>
</comment>
<comment type="interaction">
    <interactant intactId="EBI-10685">
        <id>P32489</id>
    </interactant>
    <interactant intactId="EBI-5955">
        <id>P25453</id>
        <label>DMC1</label>
    </interactant>
    <organismsDiffer>false</organismsDiffer>
    <experiments>4</experiments>
</comment>
<comment type="interaction">
    <interactant intactId="EBI-10685">
        <id>P32489</id>
    </interactant>
    <interactant intactId="EBI-16412526">
        <id>P89114</id>
        <label>SAE3</label>
    </interactant>
    <organismsDiffer>false</organismsDiffer>
    <experiments>4</experiments>
</comment>
<comment type="subcellular location">
    <subcellularLocation>
        <location evidence="1">Nucleus</location>
    </subcellularLocation>
</comment>
<comment type="similarity">
    <text evidence="2">Belongs to the SFR1/MEI5 family.</text>
</comment>
<evidence type="ECO:0000269" key="1">
    <source>
    </source>
</evidence>
<evidence type="ECO:0000305" key="2"/>
<feature type="chain" id="PRO_0000096403" description="Meiosis protein 5">
    <location>
        <begin position="1"/>
        <end position="222"/>
    </location>
</feature>
<feature type="sequence conflict" description="In Ref. 1; AAA34768." evidence="2" ref="1">
    <original>SD</original>
    <variation>VT</variation>
    <location>
        <begin position="155"/>
        <end position="156"/>
    </location>
</feature>
<feature type="sequence conflict" description="In Ref. 1; AAA34768." evidence="2" ref="1">
    <original>QLS</original>
    <variation>RTFR</variation>
    <location>
        <begin position="160"/>
        <end position="162"/>
    </location>
</feature>
<feature type="sequence conflict" description="In Ref. 1; AAA34768." evidence="2" ref="1">
    <original>E</original>
    <variation>G</variation>
    <location>
        <position position="168"/>
    </location>
</feature>
<feature type="sequence conflict" description="In Ref. 1; AAA34768." evidence="2" ref="1">
    <original>S</original>
    <variation>R</variation>
    <location>
        <position position="217"/>
    </location>
</feature>
<keyword id="KW-0227">DNA damage</keyword>
<keyword id="KW-0234">DNA repair</keyword>
<keyword id="KW-0469">Meiosis</keyword>
<keyword id="KW-0539">Nucleus</keyword>
<keyword id="KW-1185">Reference proteome</keyword>
<keyword id="KW-0749">Sporulation</keyword>
<proteinExistence type="evidence at protein level"/>
<accession>P32489</accession>
<accession>D6W3P6</accession>
<accession>Q02946</accession>
<protein>
    <recommendedName>
        <fullName>Meiosis protein 5</fullName>
    </recommendedName>
</protein>
<organism>
    <name type="scientific">Saccharomyces cerevisiae (strain ATCC 204508 / S288c)</name>
    <name type="common">Baker's yeast</name>
    <dbReference type="NCBI Taxonomy" id="559292"/>
    <lineage>
        <taxon>Eukaryota</taxon>
        <taxon>Fungi</taxon>
        <taxon>Dikarya</taxon>
        <taxon>Ascomycota</taxon>
        <taxon>Saccharomycotina</taxon>
        <taxon>Saccharomycetes</taxon>
        <taxon>Saccharomycetales</taxon>
        <taxon>Saccharomycetaceae</taxon>
        <taxon>Saccharomyces</taxon>
    </lineage>
</organism>